<reference key="1">
    <citation type="journal article" date="1997" name="J. Biol. Chem.">
        <title>The mouse tectorins. Modular matrix proteins of the inner ear homologous to components of the sperm-egg adhesion system.</title>
        <authorList>
            <person name="Legan P.K."/>
            <person name="Rau A."/>
            <person name="Keene J.N."/>
            <person name="Richardson G.P."/>
        </authorList>
    </citation>
    <scope>NUCLEOTIDE SEQUENCE [MRNA] (ISOFORMS 1 AND 2)</scope>
    <scope>PROTEIN SEQUENCE OF 25-34</scope>
    <scope>SUBUNIT</scope>
    <scope>SUBCELLULAR LOCATION</scope>
    <scope>POST-TRANSLATIONAL MODIFICATIONS</scope>
    <scope>TISSUE SPECIFICITY</scope>
    <source>
        <strain>CD-1</strain>
        <tissue>Cochlea</tissue>
    </source>
</reference>
<reference key="2">
    <citation type="journal article" date="1998" name="Nat. Genet.">
        <title>Mutations in the human alpha-tectorin gene cause autosomal dominant non-syndromic hearing impairment.</title>
        <authorList>
            <person name="Verhoeven K."/>
            <person name="Van Laer L."/>
            <person name="Kirschhofer K."/>
            <person name="Legan P.K."/>
            <person name="Hughes D.C."/>
            <person name="Schatteman I."/>
            <person name="Verstreken M."/>
            <person name="Van Hauwe P."/>
            <person name="Coucke P."/>
            <person name="Chen A."/>
            <person name="Smith R.J.H."/>
            <person name="Somers T."/>
            <person name="Offeciers F.E."/>
            <person name="Van de Heyning P."/>
            <person name="Richardson G.P."/>
            <person name="Wachtler F."/>
            <person name="Kimberling W.J."/>
            <person name="Willems P.J."/>
            <person name="Govaerts P.J."/>
            <person name="Van Camp G."/>
        </authorList>
    </citation>
    <scope>NUCLEOTIDE SEQUENCE [MRNA] (ISOFORMS 1 AND 2)</scope>
</reference>
<reference key="3">
    <citation type="journal article" date="2009" name="PLoS Biol.">
        <title>Lineage-specific biology revealed by a finished genome assembly of the mouse.</title>
        <authorList>
            <person name="Church D.M."/>
            <person name="Goodstadt L."/>
            <person name="Hillier L.W."/>
            <person name="Zody M.C."/>
            <person name="Goldstein S."/>
            <person name="She X."/>
            <person name="Bult C.J."/>
            <person name="Agarwala R."/>
            <person name="Cherry J.L."/>
            <person name="DiCuccio M."/>
            <person name="Hlavina W."/>
            <person name="Kapustin Y."/>
            <person name="Meric P."/>
            <person name="Maglott D."/>
            <person name="Birtle Z."/>
            <person name="Marques A.C."/>
            <person name="Graves T."/>
            <person name="Zhou S."/>
            <person name="Teague B."/>
            <person name="Potamousis K."/>
            <person name="Churas C."/>
            <person name="Place M."/>
            <person name="Herschleb J."/>
            <person name="Runnheim R."/>
            <person name="Forrest D."/>
            <person name="Amos-Landgraf J."/>
            <person name="Schwartz D.C."/>
            <person name="Cheng Z."/>
            <person name="Lindblad-Toh K."/>
            <person name="Eichler E.E."/>
            <person name="Ponting C.P."/>
        </authorList>
    </citation>
    <scope>NUCLEOTIDE SEQUENCE [LARGE SCALE GENOMIC DNA]</scope>
    <source>
        <strain>C57BL/6J</strain>
    </source>
</reference>
<reference key="4">
    <citation type="journal article" date="2014" name="J. Neurosci.">
        <title>Loss of the tectorial membrane protein CEACAM16 enhances spontaneous, stimulus-frequency, and transiently evoked otoacoustic emissions.</title>
        <authorList>
            <person name="Cheatham M.A."/>
            <person name="Goodyear R.J."/>
            <person name="Homma K."/>
            <person name="Legan P.K."/>
            <person name="Korchagina J."/>
            <person name="Naskar S."/>
            <person name="Siegel J.H."/>
            <person name="Dallos P."/>
            <person name="Zheng J."/>
            <person name="Richardson G.P."/>
        </authorList>
    </citation>
    <scope>INTERACTION WITH CEACAM16</scope>
</reference>
<evidence type="ECO:0000250" key="1"/>
<evidence type="ECO:0000250" key="2">
    <source>
        <dbReference type="UniProtKB" id="P07911"/>
    </source>
</evidence>
<evidence type="ECO:0000255" key="3"/>
<evidence type="ECO:0000255" key="4">
    <source>
        <dbReference type="PROSITE-ProRule" id="PRU00375"/>
    </source>
</evidence>
<evidence type="ECO:0000255" key="5">
    <source>
        <dbReference type="PROSITE-ProRule" id="PRU00570"/>
    </source>
</evidence>
<evidence type="ECO:0000255" key="6">
    <source>
        <dbReference type="PROSITE-ProRule" id="PRU00580"/>
    </source>
</evidence>
<evidence type="ECO:0000269" key="7">
    <source>
    </source>
</evidence>
<evidence type="ECO:0000269" key="8">
    <source>
    </source>
</evidence>
<evidence type="ECO:0000303" key="9">
    <source>
    </source>
</evidence>
<evidence type="ECO:0000303" key="10">
    <source>
    </source>
</evidence>
<evidence type="ECO:0000305" key="11"/>
<evidence type="ECO:0000305" key="12">
    <source>
    </source>
</evidence>
<comment type="function">
    <text evidence="1">One of the major non-collagenous components of the tectorial membrane (By similarity). The tectorial membrane is an extracellular matrix of the inner ear that covers the neuroepithelium of the cochlea and contacts the stereocilia bundles of specialized sensory hair cells. Sound induces movement of these hair cells relative to the tectorial membrane, deflects the stereocilia and leads to fluctuations in hair-cell membrane potential, transducing sound into electrical signals.</text>
</comment>
<comment type="subunit">
    <text evidence="7 11">May form homomeric filament after self-association or heteromeric filament after association with beta-tectorin (Probable). Interacts with CEACAM16 (PubMed:25080593).</text>
</comment>
<comment type="subcellular location">
    <subcellularLocation>
        <location evidence="12">Cell membrane</location>
        <topology evidence="12">Lipid-anchor</topology>
        <topology evidence="12">GPI-anchor</topology>
        <orientation evidence="12">Extracellular side</orientation>
    </subcellularLocation>
    <subcellularLocation>
        <location evidence="8">Secreted</location>
        <location evidence="8">Extracellular space</location>
        <location evidence="8">Extracellular matrix</location>
    </subcellularLocation>
    <text>Found in the non-collagenous matrix of the tectorial membrane.</text>
</comment>
<comment type="alternative products">
    <event type="alternative splicing"/>
    <isoform>
        <id>O08523-1</id>
        <name>1</name>
        <sequence type="displayed"/>
    </isoform>
    <isoform>
        <id>O08523-2</id>
        <name>2</name>
        <sequence type="described" ref="VSP_010557"/>
    </isoform>
</comment>
<comment type="tissue specificity">
    <text evidence="8">Cochlea-specific.</text>
</comment>
<comment type="domain">
    <text>Zona pellucida domain may enable to form filaments.</text>
</comment>
<comment type="PTM">
    <text>3 products of tectorin seem to exist: HMM, MMM and LMM. They may be generated by active processing or the result of proteolysis occurring between intrachain disulfide bonds.</text>
</comment>
<comment type="PTM">
    <text>The presence of a hydrophobic C-terminus preceded by a potential cleavage site strongly suggests that tectorins are synthesized as glycosylphosphatidylinositol-linked, membrane-bound precursors. Tectorins are targeted to the apical surface of the inner ear epithelia by the lipid and proteolytically released into the extracellular compartment.</text>
</comment>
<accession>O08523</accession>
<accession>E9QNR3</accession>
<gene>
    <name type="primary">Tecta</name>
</gene>
<sequence>MNYSSLLRIWVSFIFALVRHQAQPRELMYPFWQNDTRTPKVDDGSSSEIKLAIPVFFFGVPYRTVYVNNNGVVSFNVLVSQFTPESFPLTDGRAFIAPFWADVHNGIRGEIYYRETMDPAILRRATKDIRKYFKDMTTFSATWVFIVTWEEVTFYGGSSTTPVNTFQAVLVSDGSYTFTLFNYYEINWTTGTASGGDPLTGLGGVMAQAGFNGGNLTNFFSLPGSRTPEIVNIQETTNVNVPGRWAFKVDGKEIDPANGCTSRGQFLRRGEVFWDDLNCTIKCRCLDFNNEIYCQEASCSPYEVCEPKGRFFYCSPVETSTCVVFGEPHYHTFDGFLFHFQGSCAYLLARQCLQTSSLPFFSVEAKNEHRGGSAVSWVKELSVEVNGYKILIPKGSYGKVKVNDLVTSLPVTLELGAVKIYQSGMSTAVETDFGLLVTFDGQHYASISIPGSYINSTCGLCGNYNKNPLDDFLRPDGRPAMSVLDLGESWRVYHADWKCGSGCVDNCTQCDAATEALYFGSDYCGFLNKTDGPLWECGTVVDATAFVHSCVYDLCSVRDNGTLLCQAIQAYALVCQALGIPIGDWRIQTGCVSTVRCPSFSHYSVCTSSCPDTCSDLTASQNCATPCTEGCECNEGFVLSTSQCVPLHKCGCDFDGHYYTMGEFFWATANCTVQCLCEEGGDVYCFNKTCRSGEVCAVEDGYQGCFPKRETVCLLSQNQVLHTFDGAAYAFPSELSYTLLKTCPERPEYLEIDINKKKPDAGPAWLRGVRILVADQEVKIGGVGALEVKLNGQDVELPFFHPSGRLEIHRNKNSTTVESKGVVSVQYSDVGLLYIRLSTMYFNCTGGLCGFFNANASDEFCLPNGKCTDNLAVFLESWTTFEEICNGECGDLLKACNNDSELLKFYRSRSRCGIINDPSNSSFLECHGVVNVTAYYRTCLFRLCQSGGNESELCDSVARYASACKNADVEVGPWRTYDFCPLECPENSHFEECMTCTETCETLALGPICVDSCSEGCQCDEGYALQGSQCVPRSECGCNFEGHQLATNETFWVDQDCQIFCYCNGTDNSVHCETIPCRDDEYCMEESGLYYCQPRTDASCIVSGYGHYLTFDGYPFDFQTSCPLILCTTGSRPISDSFPKFIVTAKNEDRDPSLALWVKQVDVNVFGYSIVIHRAYKHTVLVNNERLYLPLKLGQGKINIFSFGFHVVVETDFGLKVVYDWKTFLSITVPRSMQNGTYGLCGRYNGNPDDDLEMPMGLPALSINEFGQSWVKRDTFCQVGCGDRCPSCAKVEGFSKVQQLCSLIPNQNAGFAKCHSKVNPTFFYKNCLFDSCIDGGAVQTACSWLQNYASTCQTQGIAVTGWRNYTSCSVTCPPNSHYESCVSVCQPRCAAIRLKSDCNHYCVEGCQCDAGYVLNGKSCILPHNCGCYSDGKYYEPKQLFWNGDCTRRCRCFRRNLIQCDPRQCKSDEECALRSGVRGCFSTKTSYCLAAGGGVFRTFDGAFLRFPANCAFVLSTICQKLPDISFQLIINFDKWSSPNLTIISPVYFYINEEQILINDRNTVKVNGTQVNVPFITGLATKIYSSEGFLVIDTSPDIQIYYNGFNVIKISISERLQNKVCGLCGNFNGDMTDDYVTLRGKPVVSSVVLAQSWKTNGMQKRPLAPSCNELQFSQYAATCDNVHIQAMQGDGYCLKLTDMKGFFQPCYGLLDPLPFYESCYLDGCYNHKKFQLCGSLAAYGEACRSFGILSTEWIEKENCSGVVEDPCVGADCPNRTCELDNGGELCGCIEPPPYGNNSHDIIDAEVTCKAAQMEVSISKCKLFQLGFEREGVRINDRQCSGIEGEDFISFQINNTKGNCGNIVQSNGTHIMYKNTIWIESANNTGNIITRDRTINVEFSCAYELDIKISLDSVVKPMLSVINLTVPTQEGSFTTKMALYKNASYKHPYRQGEVVLTTRDVLYVGVFVVGADSTHLILTLNKCYATPSRDSNDKLRYFIIEGGCQNIKDNTIGIEENGVSLTCRFHVTVFKFIGDYDEVHLHCAVSLCDSEKYSCKINCPQNSRIATDYSKEHKEQIISVGPIRRKRLDWCEDNGGCEQICTSRVDGPLCSCVTGSLQEDGRSCRASNSSVELQVWTLLLIMTQISLWHLIYKSGATS</sequence>
<dbReference type="EMBL" id="X99805">
    <property type="protein sequence ID" value="CAA68138.1"/>
    <property type="molecule type" value="mRNA"/>
</dbReference>
<dbReference type="EMBL" id="AC156631">
    <property type="status" value="NOT_ANNOTATED_CDS"/>
    <property type="molecule type" value="Genomic_DNA"/>
</dbReference>
<dbReference type="CCDS" id="CCDS23087.1">
    <molecule id="O08523-1"/>
</dbReference>
<dbReference type="CCDS" id="CCDS85660.1">
    <molecule id="O08523-2"/>
</dbReference>
<dbReference type="PIR" id="T30197">
    <property type="entry name" value="T30197"/>
</dbReference>
<dbReference type="RefSeq" id="NP_001311477.1">
    <molecule id="O08523-2"/>
    <property type="nucleotide sequence ID" value="NM_001324548.2"/>
</dbReference>
<dbReference type="RefSeq" id="NP_001365531.1">
    <molecule id="O08523-1"/>
    <property type="nucleotide sequence ID" value="NM_001378602.1"/>
</dbReference>
<dbReference type="RefSeq" id="NP_033373.2">
    <molecule id="O08523-1"/>
    <property type="nucleotide sequence ID" value="NM_009347.4"/>
</dbReference>
<dbReference type="RefSeq" id="XP_017168765.1">
    <property type="nucleotide sequence ID" value="XM_017313276.1"/>
</dbReference>
<dbReference type="SMR" id="O08523"/>
<dbReference type="FunCoup" id="O08523">
    <property type="interactions" value="69"/>
</dbReference>
<dbReference type="STRING" id="10090.ENSMUSP00000040262"/>
<dbReference type="GlyCosmos" id="O08523">
    <property type="glycosylation" value="31 sites, No reported glycans"/>
</dbReference>
<dbReference type="GlyGen" id="O08523">
    <property type="glycosylation" value="33 sites, 1 N-linked glycan (1 site)"/>
</dbReference>
<dbReference type="PhosphoSitePlus" id="O08523"/>
<dbReference type="PaxDb" id="10090-ENSMUSP00000040262"/>
<dbReference type="Antibodypedia" id="18890">
    <property type="antibodies" value="32 antibodies from 14 providers"/>
</dbReference>
<dbReference type="DNASU" id="21683"/>
<dbReference type="Ensembl" id="ENSMUST00000042190.14">
    <molecule id="O08523-1"/>
    <property type="protein sequence ID" value="ENSMUSP00000040262.8"/>
    <property type="gene ID" value="ENSMUSG00000037705.14"/>
</dbReference>
<dbReference type="Ensembl" id="ENSMUST00000160940.2">
    <molecule id="O08523-2"/>
    <property type="protein sequence ID" value="ENSMUSP00000125370.2"/>
    <property type="gene ID" value="ENSMUSG00000037705.14"/>
</dbReference>
<dbReference type="GeneID" id="21683"/>
<dbReference type="KEGG" id="mmu:21683"/>
<dbReference type="UCSC" id="uc009pau.1">
    <molecule id="O08523-1"/>
    <property type="organism name" value="mouse"/>
</dbReference>
<dbReference type="UCSC" id="uc012grn.1">
    <molecule id="O08523-2"/>
    <property type="organism name" value="mouse"/>
</dbReference>
<dbReference type="AGR" id="MGI:109575"/>
<dbReference type="CTD" id="7007"/>
<dbReference type="MGI" id="MGI:109575">
    <property type="gene designation" value="Tecta"/>
</dbReference>
<dbReference type="VEuPathDB" id="HostDB:ENSMUSG00000037705"/>
<dbReference type="eggNOG" id="KOG1216">
    <property type="taxonomic scope" value="Eukaryota"/>
</dbReference>
<dbReference type="eggNOG" id="KOG4291">
    <property type="taxonomic scope" value="Eukaryota"/>
</dbReference>
<dbReference type="GeneTree" id="ENSGT00950000183155"/>
<dbReference type="HOGENOM" id="CLU_001423_0_0_1"/>
<dbReference type="InParanoid" id="O08523"/>
<dbReference type="OMA" id="RVQTGCV"/>
<dbReference type="OrthoDB" id="5273213at2759"/>
<dbReference type="PhylomeDB" id="O08523"/>
<dbReference type="TreeFam" id="TF300299"/>
<dbReference type="Reactome" id="R-MMU-163125">
    <property type="pathway name" value="Post-translational modification: synthesis of GPI-anchored proteins"/>
</dbReference>
<dbReference type="BioGRID-ORCS" id="21683">
    <property type="hits" value="2 hits in 76 CRISPR screens"/>
</dbReference>
<dbReference type="PRO" id="PR:O08523"/>
<dbReference type="Proteomes" id="UP000000589">
    <property type="component" value="Chromosome 9"/>
</dbReference>
<dbReference type="RNAct" id="O08523">
    <property type="molecule type" value="protein"/>
</dbReference>
<dbReference type="Bgee" id="ENSMUSG00000037705">
    <property type="expression patterns" value="Expressed in epithelium of cochlear duct and 28 other cell types or tissues"/>
</dbReference>
<dbReference type="GO" id="GO:0031012">
    <property type="term" value="C:extracellular matrix"/>
    <property type="evidence" value="ECO:0000314"/>
    <property type="project" value="MGI"/>
</dbReference>
<dbReference type="GO" id="GO:0005576">
    <property type="term" value="C:extracellular region"/>
    <property type="evidence" value="ECO:0007669"/>
    <property type="project" value="UniProtKB-KW"/>
</dbReference>
<dbReference type="GO" id="GO:0005886">
    <property type="term" value="C:plasma membrane"/>
    <property type="evidence" value="ECO:0007669"/>
    <property type="project" value="UniProtKB-SubCell"/>
</dbReference>
<dbReference type="GO" id="GO:0098552">
    <property type="term" value="C:side of membrane"/>
    <property type="evidence" value="ECO:0007669"/>
    <property type="project" value="UniProtKB-KW"/>
</dbReference>
<dbReference type="GO" id="GO:0005201">
    <property type="term" value="F:extracellular matrix structural constituent"/>
    <property type="evidence" value="ECO:0000314"/>
    <property type="project" value="MGI"/>
</dbReference>
<dbReference type="GO" id="GO:0060088">
    <property type="term" value="P:auditory receptor cell stereocilium organization"/>
    <property type="evidence" value="ECO:0000316"/>
    <property type="project" value="MGI"/>
</dbReference>
<dbReference type="GO" id="GO:0007160">
    <property type="term" value="P:cell-matrix adhesion"/>
    <property type="evidence" value="ECO:0007669"/>
    <property type="project" value="InterPro"/>
</dbReference>
<dbReference type="GO" id="GO:0007605">
    <property type="term" value="P:sensory perception of sound"/>
    <property type="evidence" value="ECO:0000304"/>
    <property type="project" value="MGI"/>
</dbReference>
<dbReference type="CDD" id="cd19941">
    <property type="entry name" value="TIL"/>
    <property type="match status" value="3"/>
</dbReference>
<dbReference type="FunFam" id="2.10.25.10:FF:000055">
    <property type="entry name" value="alpha-tectorin isoform X1"/>
    <property type="match status" value="3"/>
</dbReference>
<dbReference type="FunFam" id="2.10.25.10:FF:000451">
    <property type="entry name" value="alpha-tectorin isoform X1"/>
    <property type="match status" value="1"/>
</dbReference>
<dbReference type="FunFam" id="2.60.40.4100:FF:000001">
    <property type="entry name" value="alpha-tectorin isoform X1"/>
    <property type="match status" value="1"/>
</dbReference>
<dbReference type="FunFam" id="2.60.40.3210:FF:000002">
    <property type="entry name" value="Tectorin alpha"/>
    <property type="match status" value="1"/>
</dbReference>
<dbReference type="Gene3D" id="2.10.25.10">
    <property type="entry name" value="Laminin"/>
    <property type="match status" value="4"/>
</dbReference>
<dbReference type="Gene3D" id="2.60.40.4100">
    <property type="entry name" value="Zona pellucida, ZP-C domain"/>
    <property type="match status" value="1"/>
</dbReference>
<dbReference type="Gene3D" id="2.60.40.3210">
    <property type="entry name" value="Zona pellucida, ZP-N domain"/>
    <property type="match status" value="1"/>
</dbReference>
<dbReference type="InterPro" id="IPR052749">
    <property type="entry name" value="Alpha-tectorin"/>
</dbReference>
<dbReference type="InterPro" id="IPR003886">
    <property type="entry name" value="NIDO_dom"/>
</dbReference>
<dbReference type="InterPro" id="IPR036084">
    <property type="entry name" value="Ser_inhib-like_sf"/>
</dbReference>
<dbReference type="InterPro" id="IPR002919">
    <property type="entry name" value="TIL_dom"/>
</dbReference>
<dbReference type="InterPro" id="IPR025615">
    <property type="entry name" value="TILa_dom"/>
</dbReference>
<dbReference type="InterPro" id="IPR014853">
    <property type="entry name" value="VWF/SSPO/ZAN-like_Cys-rich_dom"/>
</dbReference>
<dbReference type="InterPro" id="IPR001007">
    <property type="entry name" value="VWF_dom"/>
</dbReference>
<dbReference type="InterPro" id="IPR001846">
    <property type="entry name" value="VWF_type-D"/>
</dbReference>
<dbReference type="InterPro" id="IPR055355">
    <property type="entry name" value="ZP-C"/>
</dbReference>
<dbReference type="InterPro" id="IPR042235">
    <property type="entry name" value="ZP-C_dom"/>
</dbReference>
<dbReference type="InterPro" id="IPR001507">
    <property type="entry name" value="ZP_dom"/>
</dbReference>
<dbReference type="InterPro" id="IPR017977">
    <property type="entry name" value="ZP_dom_CS"/>
</dbReference>
<dbReference type="PANTHER" id="PTHR46160:SF3">
    <property type="entry name" value="ALPHA-TECTORIN"/>
    <property type="match status" value="1"/>
</dbReference>
<dbReference type="PANTHER" id="PTHR46160">
    <property type="entry name" value="ALPHA-TECTORIN-RELATED"/>
    <property type="match status" value="1"/>
</dbReference>
<dbReference type="Pfam" id="PF08742">
    <property type="entry name" value="C8"/>
    <property type="match status" value="4"/>
</dbReference>
<dbReference type="Pfam" id="PF06119">
    <property type="entry name" value="NIDO"/>
    <property type="match status" value="1"/>
</dbReference>
<dbReference type="Pfam" id="PF01826">
    <property type="entry name" value="TIL"/>
    <property type="match status" value="3"/>
</dbReference>
<dbReference type="Pfam" id="PF12714">
    <property type="entry name" value="TILa"/>
    <property type="match status" value="2"/>
</dbReference>
<dbReference type="Pfam" id="PF00094">
    <property type="entry name" value="VWD"/>
    <property type="match status" value="4"/>
</dbReference>
<dbReference type="Pfam" id="PF00100">
    <property type="entry name" value="Zona_pellucida"/>
    <property type="match status" value="1"/>
</dbReference>
<dbReference type="SMART" id="SM00832">
    <property type="entry name" value="C8"/>
    <property type="match status" value="4"/>
</dbReference>
<dbReference type="SMART" id="SM00539">
    <property type="entry name" value="NIDO"/>
    <property type="match status" value="1"/>
</dbReference>
<dbReference type="SMART" id="SM00215">
    <property type="entry name" value="VWC_out"/>
    <property type="match status" value="3"/>
</dbReference>
<dbReference type="SMART" id="SM00216">
    <property type="entry name" value="VWD"/>
    <property type="match status" value="4"/>
</dbReference>
<dbReference type="SMART" id="SM00241">
    <property type="entry name" value="ZP"/>
    <property type="match status" value="1"/>
</dbReference>
<dbReference type="SUPFAM" id="SSF57567">
    <property type="entry name" value="Serine protease inhibitors"/>
    <property type="match status" value="3"/>
</dbReference>
<dbReference type="PROSITE" id="PS51220">
    <property type="entry name" value="NIDO"/>
    <property type="match status" value="1"/>
</dbReference>
<dbReference type="PROSITE" id="PS51233">
    <property type="entry name" value="VWFD"/>
    <property type="match status" value="4"/>
</dbReference>
<dbReference type="PROSITE" id="PS00682">
    <property type="entry name" value="ZP_1"/>
    <property type="match status" value="1"/>
</dbReference>
<dbReference type="PROSITE" id="PS51034">
    <property type="entry name" value="ZP_2"/>
    <property type="match status" value="1"/>
</dbReference>
<organism>
    <name type="scientific">Mus musculus</name>
    <name type="common">Mouse</name>
    <dbReference type="NCBI Taxonomy" id="10090"/>
    <lineage>
        <taxon>Eukaryota</taxon>
        <taxon>Metazoa</taxon>
        <taxon>Chordata</taxon>
        <taxon>Craniata</taxon>
        <taxon>Vertebrata</taxon>
        <taxon>Euteleostomi</taxon>
        <taxon>Mammalia</taxon>
        <taxon>Eutheria</taxon>
        <taxon>Euarchontoglires</taxon>
        <taxon>Glires</taxon>
        <taxon>Rodentia</taxon>
        <taxon>Myomorpha</taxon>
        <taxon>Muroidea</taxon>
        <taxon>Muridae</taxon>
        <taxon>Murinae</taxon>
        <taxon>Mus</taxon>
        <taxon>Mus</taxon>
    </lineage>
</organism>
<protein>
    <recommendedName>
        <fullName>Alpha-tectorin</fullName>
    </recommendedName>
</protein>
<keyword id="KW-0025">Alternative splicing</keyword>
<keyword id="KW-1003">Cell membrane</keyword>
<keyword id="KW-0903">Direct protein sequencing</keyword>
<keyword id="KW-1015">Disulfide bond</keyword>
<keyword id="KW-0272">Extracellular matrix</keyword>
<keyword id="KW-0325">Glycoprotein</keyword>
<keyword id="KW-0336">GPI-anchor</keyword>
<keyword id="KW-1009">Hearing</keyword>
<keyword id="KW-0449">Lipoprotein</keyword>
<keyword id="KW-0472">Membrane</keyword>
<keyword id="KW-1185">Reference proteome</keyword>
<keyword id="KW-0677">Repeat</keyword>
<keyword id="KW-0964">Secreted</keyword>
<keyword id="KW-0732">Signal</keyword>
<name>TECTA_MOUSE</name>
<feature type="signal peptide" evidence="8">
    <location>
        <begin position="1"/>
        <end position="24"/>
    </location>
</feature>
<feature type="chain" id="PRO_0000041737" description="Alpha-tectorin">
    <location>
        <begin position="25"/>
        <end position="2091"/>
    </location>
</feature>
<feature type="propeptide" id="PRO_0000041738" description="Removed in mature form" evidence="3">
    <location>
        <begin position="2092"/>
        <end position="2155"/>
    </location>
</feature>
<feature type="domain" description="NIDO" evidence="5">
    <location>
        <begin position="98"/>
        <end position="252"/>
    </location>
</feature>
<feature type="domain" description="VWFC">
    <location>
        <begin position="260"/>
        <end position="314"/>
    </location>
</feature>
<feature type="domain" description="VWFD 1" evidence="6">
    <location>
        <begin position="320"/>
        <end position="500"/>
    </location>
</feature>
<feature type="domain" description="TIL 1">
    <location>
        <begin position="597"/>
        <end position="650"/>
    </location>
</feature>
<feature type="domain" description="VWFD 2" evidence="6">
    <location>
        <begin position="711"/>
        <end position="886"/>
    </location>
</feature>
<feature type="domain" description="TIL 2">
    <location>
        <begin position="984"/>
        <end position="1036"/>
    </location>
</feature>
<feature type="domain" description="VWFD 3" evidence="6">
    <location>
        <begin position="1098"/>
        <end position="1278"/>
    </location>
</feature>
<feature type="domain" description="TIL 3">
    <location>
        <begin position="1372"/>
        <end position="1425"/>
    </location>
</feature>
<feature type="domain" description="VWFD 4" evidence="6">
    <location>
        <begin position="1485"/>
        <end position="1666"/>
    </location>
</feature>
<feature type="domain" description="ZP" evidence="4">
    <location>
        <begin position="1805"/>
        <end position="2059"/>
    </location>
</feature>
<feature type="lipid moiety-binding region" description="GPI-anchor amidated asparagine" evidence="3">
    <location>
        <position position="2091"/>
    </location>
</feature>
<feature type="glycosylation site" description="N-linked (GlcNAc...) asparagine" evidence="3">
    <location>
        <position position="34"/>
    </location>
</feature>
<feature type="glycosylation site" description="N-linked (GlcNAc...) asparagine" evidence="3">
    <location>
        <position position="187"/>
    </location>
</feature>
<feature type="glycosylation site" description="N-linked (GlcNAc...) asparagine" evidence="3">
    <location>
        <position position="215"/>
    </location>
</feature>
<feature type="glycosylation site" description="N-linked (GlcNAc...) asparagine" evidence="3">
    <location>
        <position position="278"/>
    </location>
</feature>
<feature type="glycosylation site" description="N-linked (GlcNAc...) asparagine" evidence="3">
    <location>
        <position position="455"/>
    </location>
</feature>
<feature type="glycosylation site" description="N-linked (GlcNAc...) asparagine" evidence="3">
    <location>
        <position position="506"/>
    </location>
</feature>
<feature type="glycosylation site" description="N-linked (GlcNAc...) asparagine" evidence="3">
    <location>
        <position position="528"/>
    </location>
</feature>
<feature type="glycosylation site" description="N-linked (GlcNAc...) asparagine" evidence="3">
    <location>
        <position position="560"/>
    </location>
</feature>
<feature type="glycosylation site" description="N-linked (GlcNAc...) asparagine" evidence="3">
    <location>
        <position position="670"/>
    </location>
</feature>
<feature type="glycosylation site" description="N-linked (GlcNAc...) asparagine" evidence="3">
    <location>
        <position position="687"/>
    </location>
</feature>
<feature type="glycosylation site" description="N-linked (GlcNAc...) asparagine" evidence="3">
    <location>
        <position position="813"/>
    </location>
</feature>
<feature type="glycosylation site" description="N-linked (GlcNAc...) asparagine" evidence="3">
    <location>
        <position position="843"/>
    </location>
</feature>
<feature type="glycosylation site" description="N-linked (GlcNAc...) asparagine" evidence="3">
    <location>
        <position position="855"/>
    </location>
</feature>
<feature type="glycosylation site" description="N-linked (GlcNAc...) asparagine" evidence="3">
    <location>
        <position position="898"/>
    </location>
</feature>
<feature type="glycosylation site" description="N-linked (GlcNAc...) asparagine" evidence="3">
    <location>
        <position position="920"/>
    </location>
</feature>
<feature type="glycosylation site" description="N-linked (GlcNAc...) asparagine" evidence="3">
    <location>
        <position position="931"/>
    </location>
</feature>
<feature type="glycosylation site" description="N-linked (GlcNAc...) asparagine" evidence="3">
    <location>
        <position position="949"/>
    </location>
</feature>
<feature type="glycosylation site" description="N-linked (GlcNAc...) asparagine" evidence="3">
    <location>
        <position position="1048"/>
    </location>
</feature>
<feature type="glycosylation site" description="N-linked (GlcNAc...) asparagine" evidence="3">
    <location>
        <position position="1064"/>
    </location>
</feature>
<feature type="glycosylation site" description="N-linked (GlcNAc...) asparagine" evidence="3">
    <location>
        <position position="1235"/>
    </location>
</feature>
<feature type="glycosylation site" description="N-linked (GlcNAc...) asparagine" evidence="3">
    <location>
        <position position="1364"/>
    </location>
</feature>
<feature type="glycosylation site" description="N-linked (GlcNAc...) asparagine" evidence="3">
    <location>
        <position position="1538"/>
    </location>
</feature>
<feature type="glycosylation site" description="N-linked (GlcNAc...) asparagine" evidence="3">
    <location>
        <position position="1565"/>
    </location>
</feature>
<feature type="glycosylation site" description="N-linked (GlcNAc...) asparagine" evidence="3">
    <location>
        <position position="1756"/>
    </location>
</feature>
<feature type="glycosylation site" description="N-linked (GlcNAc...) asparagine" evidence="3">
    <location>
        <position position="1772"/>
    </location>
</feature>
<feature type="glycosylation site" description="N-linked (GlcNAc...) asparagine" evidence="3">
    <location>
        <position position="1794"/>
    </location>
</feature>
<feature type="glycosylation site" description="N-linked (GlcNAc...) asparagine" evidence="3">
    <location>
        <position position="1851"/>
    </location>
</feature>
<feature type="glycosylation site" description="N-linked (GlcNAc...) asparagine" evidence="3">
    <location>
        <position position="1864"/>
    </location>
</feature>
<feature type="glycosylation site" description="N-linked (GlcNAc...) asparagine" evidence="3">
    <location>
        <position position="1880"/>
    </location>
</feature>
<feature type="glycosylation site" description="N-linked (GlcNAc...) asparagine" evidence="3">
    <location>
        <position position="1920"/>
    </location>
</feature>
<feature type="glycosylation site" description="N-linked (GlcNAc...) asparagine" evidence="3">
    <location>
        <position position="1939"/>
    </location>
</feature>
<feature type="disulfide bond" evidence="6">
    <location>
        <begin position="322"/>
        <end position="461"/>
    </location>
</feature>
<feature type="disulfide bond" evidence="6">
    <location>
        <begin position="344"/>
        <end position="499"/>
    </location>
</feature>
<feature type="disulfide bond" evidence="6">
    <location>
        <begin position="713"/>
        <end position="849"/>
    </location>
</feature>
<feature type="disulfide bond" evidence="6">
    <location>
        <begin position="1100"/>
        <end position="1241"/>
    </location>
</feature>
<feature type="disulfide bond" evidence="6">
    <location>
        <begin position="1122"/>
        <end position="1277"/>
    </location>
</feature>
<feature type="disulfide bond" evidence="6">
    <location>
        <begin position="1487"/>
        <end position="1622"/>
    </location>
</feature>
<feature type="disulfide bond" evidence="6">
    <location>
        <begin position="1509"/>
        <end position="1665"/>
    </location>
</feature>
<feature type="disulfide bond" evidence="2">
    <location>
        <begin position="1717"/>
        <end position="1775"/>
    </location>
</feature>
<feature type="disulfide bond" evidence="2">
    <location>
        <begin position="1741"/>
        <end position="1784"/>
    </location>
</feature>
<feature type="disulfide bond" evidence="2">
    <location>
        <begin position="1786"/>
        <end position="1818"/>
    </location>
</feature>
<feature type="disulfide bond" evidence="2">
    <location>
        <begin position="1806"/>
        <end position="1898"/>
    </location>
</feature>
<feature type="disulfide bond" evidence="2">
    <location>
        <begin position="1837"/>
        <end position="1857"/>
    </location>
</feature>
<feature type="disulfide bond" evidence="6">
    <location>
        <begin position="1980"/>
        <end position="2040"/>
    </location>
</feature>
<feature type="disulfide bond" evidence="2">
    <location>
        <begin position="2001"/>
        <end position="2056"/>
    </location>
</feature>
<feature type="disulfide bond" evidence="2">
    <location>
        <begin position="2045"/>
        <end position="2052"/>
    </location>
</feature>
<feature type="splice variant" id="VSP_010557" description="In isoform 2." evidence="9 10">
    <location>
        <begin position="1659"/>
        <end position="1663"/>
    </location>
</feature>
<feature type="sequence conflict" description="In Ref. 1; CAA68138." evidence="11" ref="1">
    <original>S</original>
    <variation>T</variation>
    <location>
        <position position="803"/>
    </location>
</feature>
<feature type="sequence conflict" description="In Ref. 1; CAA68138." evidence="11" ref="1">
    <original>A</original>
    <variation>R</variation>
    <location>
        <position position="1024"/>
    </location>
</feature>
<feature type="sequence conflict" description="In Ref. 1; CAA68138." evidence="11" ref="1">
    <original>P</original>
    <variation>T</variation>
    <location>
        <position position="1032"/>
    </location>
</feature>
<feature type="sequence conflict" description="In Ref. 1; CAA68138." evidence="11" ref="1">
    <original>V</original>
    <variation>I</variation>
    <location>
        <position position="1229"/>
    </location>
</feature>
<feature type="sequence conflict" description="In Ref. 1; CAA68138." evidence="11" ref="1">
    <original>I</original>
    <variation>V</variation>
    <location>
        <position position="2148"/>
    </location>
</feature>
<proteinExistence type="evidence at protein level"/>